<reference key="1">
    <citation type="submission" date="2007-06" db="EMBL/GenBank/DDBJ databases">
        <title>Complete sequence of Marinomonas sp. MWYL1.</title>
        <authorList>
            <consortium name="US DOE Joint Genome Institute"/>
            <person name="Copeland A."/>
            <person name="Lucas S."/>
            <person name="Lapidus A."/>
            <person name="Barry K."/>
            <person name="Glavina del Rio T."/>
            <person name="Dalin E."/>
            <person name="Tice H."/>
            <person name="Pitluck S."/>
            <person name="Kiss H."/>
            <person name="Brettin T."/>
            <person name="Bruce D."/>
            <person name="Detter J.C."/>
            <person name="Han C."/>
            <person name="Schmutz J."/>
            <person name="Larimer F."/>
            <person name="Land M."/>
            <person name="Hauser L."/>
            <person name="Kyrpides N."/>
            <person name="Kim E."/>
            <person name="Johnston A.W.B."/>
            <person name="Todd J.D."/>
            <person name="Rogers R."/>
            <person name="Wexler M."/>
            <person name="Bond P.L."/>
            <person name="Li Y."/>
            <person name="Richardson P."/>
        </authorList>
    </citation>
    <scope>NUCLEOTIDE SEQUENCE [LARGE SCALE GENOMIC DNA]</scope>
    <source>
        <strain>MWYL1</strain>
    </source>
</reference>
<proteinExistence type="inferred from homology"/>
<evidence type="ECO:0000255" key="1">
    <source>
        <dbReference type="HAMAP-Rule" id="MF_01318"/>
    </source>
</evidence>
<evidence type="ECO:0000305" key="2"/>
<organism>
    <name type="scientific">Marinomonas sp. (strain MWYL1)</name>
    <dbReference type="NCBI Taxonomy" id="400668"/>
    <lineage>
        <taxon>Bacteria</taxon>
        <taxon>Pseudomonadati</taxon>
        <taxon>Pseudomonadota</taxon>
        <taxon>Gammaproteobacteria</taxon>
        <taxon>Oceanospirillales</taxon>
        <taxon>Oceanospirillaceae</taxon>
        <taxon>Marinomonas</taxon>
    </lineage>
</organism>
<sequence length="233" mass="24413">MAKLTKRARLIAEKVEATKLYSVEEAVALLSELSTVKFKESIDVSVNLGVDPRKSDQVVRGSTVLPHGAGKDVRVAVFAQGANAEAAKEAGADVVGFEDLAEQVKAGNLDFDVVIASPDAMRIVGQLGQVLGPRGLMPNPKVGTVTPDVATAVRNAKAGQARYRTDKNGIIHAAVGSIEFAADAIRGNLEALLTDLRRAKPASSKGVYLRKVTLSSTMGPGLQIDLGALNSTK</sequence>
<name>RL1_MARMS</name>
<keyword id="KW-0678">Repressor</keyword>
<keyword id="KW-0687">Ribonucleoprotein</keyword>
<keyword id="KW-0689">Ribosomal protein</keyword>
<keyword id="KW-0694">RNA-binding</keyword>
<keyword id="KW-0699">rRNA-binding</keyword>
<keyword id="KW-0810">Translation regulation</keyword>
<keyword id="KW-0820">tRNA-binding</keyword>
<comment type="function">
    <text evidence="1">Binds directly to 23S rRNA. The L1 stalk is quite mobile in the ribosome, and is involved in E site tRNA release.</text>
</comment>
<comment type="function">
    <text evidence="1">Protein L1 is also a translational repressor protein, it controls the translation of the L11 operon by binding to its mRNA.</text>
</comment>
<comment type="subunit">
    <text evidence="1">Part of the 50S ribosomal subunit.</text>
</comment>
<comment type="similarity">
    <text evidence="1">Belongs to the universal ribosomal protein uL1 family.</text>
</comment>
<accession>A6W3A2</accession>
<protein>
    <recommendedName>
        <fullName evidence="1">Large ribosomal subunit protein uL1</fullName>
    </recommendedName>
    <alternativeName>
        <fullName evidence="2">50S ribosomal protein L1</fullName>
    </alternativeName>
</protein>
<feature type="chain" id="PRO_1000086291" description="Large ribosomal subunit protein uL1">
    <location>
        <begin position="1"/>
        <end position="233"/>
    </location>
</feature>
<gene>
    <name evidence="1" type="primary">rplA</name>
    <name type="ordered locus">Mmwyl1_4286</name>
</gene>
<dbReference type="EMBL" id="CP000749">
    <property type="protein sequence ID" value="ABR73181.1"/>
    <property type="molecule type" value="Genomic_DNA"/>
</dbReference>
<dbReference type="SMR" id="A6W3A2"/>
<dbReference type="STRING" id="400668.Mmwyl1_4286"/>
<dbReference type="KEGG" id="mmw:Mmwyl1_4286"/>
<dbReference type="eggNOG" id="COG0081">
    <property type="taxonomic scope" value="Bacteria"/>
</dbReference>
<dbReference type="HOGENOM" id="CLU_062853_0_0_6"/>
<dbReference type="OrthoDB" id="9803740at2"/>
<dbReference type="GO" id="GO:0022625">
    <property type="term" value="C:cytosolic large ribosomal subunit"/>
    <property type="evidence" value="ECO:0007669"/>
    <property type="project" value="TreeGrafter"/>
</dbReference>
<dbReference type="GO" id="GO:0019843">
    <property type="term" value="F:rRNA binding"/>
    <property type="evidence" value="ECO:0007669"/>
    <property type="project" value="UniProtKB-UniRule"/>
</dbReference>
<dbReference type="GO" id="GO:0003735">
    <property type="term" value="F:structural constituent of ribosome"/>
    <property type="evidence" value="ECO:0007669"/>
    <property type="project" value="InterPro"/>
</dbReference>
<dbReference type="GO" id="GO:0000049">
    <property type="term" value="F:tRNA binding"/>
    <property type="evidence" value="ECO:0007669"/>
    <property type="project" value="UniProtKB-KW"/>
</dbReference>
<dbReference type="GO" id="GO:0006417">
    <property type="term" value="P:regulation of translation"/>
    <property type="evidence" value="ECO:0007669"/>
    <property type="project" value="UniProtKB-KW"/>
</dbReference>
<dbReference type="GO" id="GO:0006412">
    <property type="term" value="P:translation"/>
    <property type="evidence" value="ECO:0007669"/>
    <property type="project" value="UniProtKB-UniRule"/>
</dbReference>
<dbReference type="CDD" id="cd00403">
    <property type="entry name" value="Ribosomal_L1"/>
    <property type="match status" value="1"/>
</dbReference>
<dbReference type="FunFam" id="3.40.50.790:FF:000001">
    <property type="entry name" value="50S ribosomal protein L1"/>
    <property type="match status" value="1"/>
</dbReference>
<dbReference type="Gene3D" id="3.30.190.20">
    <property type="match status" value="1"/>
</dbReference>
<dbReference type="Gene3D" id="3.40.50.790">
    <property type="match status" value="1"/>
</dbReference>
<dbReference type="HAMAP" id="MF_01318_B">
    <property type="entry name" value="Ribosomal_uL1_B"/>
    <property type="match status" value="1"/>
</dbReference>
<dbReference type="InterPro" id="IPR005878">
    <property type="entry name" value="Ribosom_uL1_bac-type"/>
</dbReference>
<dbReference type="InterPro" id="IPR002143">
    <property type="entry name" value="Ribosomal_uL1"/>
</dbReference>
<dbReference type="InterPro" id="IPR023674">
    <property type="entry name" value="Ribosomal_uL1-like"/>
</dbReference>
<dbReference type="InterPro" id="IPR028364">
    <property type="entry name" value="Ribosomal_uL1/biogenesis"/>
</dbReference>
<dbReference type="InterPro" id="IPR016095">
    <property type="entry name" value="Ribosomal_uL1_3-a/b-sand"/>
</dbReference>
<dbReference type="InterPro" id="IPR023673">
    <property type="entry name" value="Ribosomal_uL1_CS"/>
</dbReference>
<dbReference type="NCBIfam" id="TIGR01169">
    <property type="entry name" value="rplA_bact"/>
    <property type="match status" value="1"/>
</dbReference>
<dbReference type="PANTHER" id="PTHR36427">
    <property type="entry name" value="54S RIBOSOMAL PROTEIN L1, MITOCHONDRIAL"/>
    <property type="match status" value="1"/>
</dbReference>
<dbReference type="PANTHER" id="PTHR36427:SF3">
    <property type="entry name" value="LARGE RIBOSOMAL SUBUNIT PROTEIN UL1M"/>
    <property type="match status" value="1"/>
</dbReference>
<dbReference type="Pfam" id="PF00687">
    <property type="entry name" value="Ribosomal_L1"/>
    <property type="match status" value="1"/>
</dbReference>
<dbReference type="PIRSF" id="PIRSF002155">
    <property type="entry name" value="Ribosomal_L1"/>
    <property type="match status" value="1"/>
</dbReference>
<dbReference type="SUPFAM" id="SSF56808">
    <property type="entry name" value="Ribosomal protein L1"/>
    <property type="match status" value="1"/>
</dbReference>
<dbReference type="PROSITE" id="PS01199">
    <property type="entry name" value="RIBOSOMAL_L1"/>
    <property type="match status" value="1"/>
</dbReference>